<protein>
    <recommendedName>
        <fullName>Pro-thyrotropin-releasing hormone-A</fullName>
        <shortName>Pro-TRH-A</shortName>
    </recommendedName>
    <alternativeName>
        <fullName>Prothyroliberin type A</fullName>
    </alternativeName>
    <component>
        <recommendedName>
            <fullName>Thyrotropin-releasing hormone</fullName>
            <shortName>TRH</shortName>
        </recommendedName>
        <alternativeName>
            <fullName>Protirelin</fullName>
        </alternativeName>
        <alternativeName>
            <fullName>TSH-releasing factor</fullName>
        </alternativeName>
        <alternativeName>
            <fullName>Thyroliberin</fullName>
        </alternativeName>
        <alternativeName>
            <fullName>Thyrotropin-releasing factor</fullName>
            <shortName>TRF</shortName>
        </alternativeName>
    </component>
</protein>
<reference key="1">
    <citation type="journal article" date="1990" name="J. Biol. Chem.">
        <title>Two precursors of thyrotropin-releasing hormone from skin of Xenopus laevis. Each contains seven copies of the end product.</title>
        <authorList>
            <person name="Kuchler K."/>
            <person name="Richter K."/>
            <person name="Trnovsky J."/>
            <person name="Egger R."/>
            <person name="Kreil G."/>
        </authorList>
    </citation>
    <scope>NUCLEOTIDE SEQUENCE [MRNA]</scope>
    <source>
        <tissue>Skin</tissue>
    </source>
</reference>
<reference key="2">
    <citation type="journal article" date="1984" name="EMBO J.">
        <title>Biosynthesis of thyrotropin releasing hormone in the skin of Xenopus laevis: partial sequence of the precursor deduced from cloned cDNA.</title>
        <authorList>
            <person name="Richter K."/>
            <person name="Kawashima E."/>
            <person name="Egger R."/>
            <person name="Kreil G."/>
        </authorList>
    </citation>
    <scope>NUCLEOTIDE SEQUENCE [MRNA] OF 1-123</scope>
    <source>
        <tissue>Skin</tissue>
    </source>
</reference>
<evidence type="ECO:0000250" key="1"/>
<evidence type="ECO:0000256" key="2">
    <source>
        <dbReference type="SAM" id="MobiDB-lite"/>
    </source>
</evidence>
<evidence type="ECO:0000305" key="3"/>
<name>TRHA_XENLA</name>
<comment type="subcellular location">
    <subcellularLocation>
        <location>Secreted</location>
    </subcellularLocation>
</comment>
<comment type="miscellaneous">
    <text>This precursor contains seven copies of thyroliberin.</text>
</comment>
<comment type="similarity">
    <text evidence="3">Belongs to the TRH family.</text>
</comment>
<gene>
    <name type="primary">trh-a</name>
</gene>
<sequence length="227" mass="26336">MVSVWWLLLLGTTVSHMVHTQEQPLLEEDTAPLDDLDVLEKAKGILIRSILEGFQEGQQNNRDLPDAMEMISKRQHPGKRFQEEIEKRQHPGKRDLEDLNLELSKRQHPGRRFVDDVEKRQHPGKREEGDWSRRYLTDDSRYLDLLSDVSRRQHPGKRVPAPLFTKRQHPGKRVTEEEGDTEFENSKEVGKRQHPGKRYDPCEGPNAYNCNSGNILPDSVEELSFGL</sequence>
<accession>P01152</accession>
<organism>
    <name type="scientific">Xenopus laevis</name>
    <name type="common">African clawed frog</name>
    <dbReference type="NCBI Taxonomy" id="8355"/>
    <lineage>
        <taxon>Eukaryota</taxon>
        <taxon>Metazoa</taxon>
        <taxon>Chordata</taxon>
        <taxon>Craniata</taxon>
        <taxon>Vertebrata</taxon>
        <taxon>Euteleostomi</taxon>
        <taxon>Amphibia</taxon>
        <taxon>Batrachia</taxon>
        <taxon>Anura</taxon>
        <taxon>Pipoidea</taxon>
        <taxon>Pipidae</taxon>
        <taxon>Xenopodinae</taxon>
        <taxon>Xenopus</taxon>
        <taxon>Xenopus</taxon>
    </lineage>
</organism>
<proteinExistence type="evidence at transcript level"/>
<keyword id="KW-0027">Amidation</keyword>
<keyword id="KW-0165">Cleavage on pair of basic residues</keyword>
<keyword id="KW-0372">Hormone</keyword>
<keyword id="KW-0873">Pyrrolidone carboxylic acid</keyword>
<keyword id="KW-1185">Reference proteome</keyword>
<keyword id="KW-0677">Repeat</keyword>
<keyword id="KW-0964">Secreted</keyword>
<keyword id="KW-0732">Signal</keyword>
<feature type="signal peptide">
    <location>
        <begin position="1"/>
        <end position="15"/>
    </location>
</feature>
<feature type="chain" id="PRO_0000022493" description="Pro-thyrotropin-releasing hormone-A">
    <location>
        <begin position="16"/>
        <end position="227"/>
    </location>
</feature>
<feature type="peptide" id="PRO_0000022494" description="Thyrotropin-releasing hormone">
    <location>
        <begin position="75"/>
        <end position="77"/>
    </location>
</feature>
<feature type="peptide" id="PRO_0000022495" description="Thyrotropin-releasing hormone">
    <location>
        <begin position="89"/>
        <end position="91"/>
    </location>
</feature>
<feature type="peptide" id="PRO_0000022496" description="Thyrotropin-releasing hormone">
    <location>
        <begin position="107"/>
        <end position="109"/>
    </location>
</feature>
<feature type="peptide" id="PRO_0000022497" description="Thyrotropin-releasing hormone">
    <location>
        <begin position="121"/>
        <end position="123"/>
    </location>
</feature>
<feature type="peptide" id="PRO_0000022498" description="Thyrotropin-releasing hormone">
    <location>
        <begin position="153"/>
        <end position="155"/>
    </location>
</feature>
<feature type="peptide" id="PRO_0000022499" description="Thyrotropin-releasing hormone">
    <location>
        <begin position="168"/>
        <end position="170"/>
    </location>
</feature>
<feature type="peptide" id="PRO_0000022500" description="Thyrotropin-releasing hormone">
    <location>
        <begin position="193"/>
        <end position="195"/>
    </location>
</feature>
<feature type="region of interest" description="Disordered" evidence="2">
    <location>
        <begin position="107"/>
        <end position="128"/>
    </location>
</feature>
<feature type="region of interest" description="Disordered" evidence="2">
    <location>
        <begin position="151"/>
        <end position="204"/>
    </location>
</feature>
<feature type="compositionally biased region" description="Basic and acidic residues" evidence="2">
    <location>
        <begin position="112"/>
        <end position="128"/>
    </location>
</feature>
<feature type="compositionally biased region" description="Basic and acidic residues" evidence="2">
    <location>
        <begin position="184"/>
        <end position="201"/>
    </location>
</feature>
<feature type="modified residue" description="Pyrrolidone carboxylic acid" evidence="1">
    <location>
        <position position="75"/>
    </location>
</feature>
<feature type="modified residue" description="Proline amide" evidence="1">
    <location>
        <position position="77"/>
    </location>
</feature>
<feature type="modified residue" description="Pyrrolidone carboxylic acid" evidence="1">
    <location>
        <position position="89"/>
    </location>
</feature>
<feature type="modified residue" description="Proline amide" evidence="1">
    <location>
        <position position="91"/>
    </location>
</feature>
<feature type="modified residue" description="Pyrrolidone carboxylic acid" evidence="1">
    <location>
        <position position="107"/>
    </location>
</feature>
<feature type="modified residue" description="Proline amide" evidence="1">
    <location>
        <position position="109"/>
    </location>
</feature>
<feature type="modified residue" description="Pyrrolidone carboxylic acid" evidence="1">
    <location>
        <position position="121"/>
    </location>
</feature>
<feature type="modified residue" description="Proline amide" evidence="1">
    <location>
        <position position="123"/>
    </location>
</feature>
<feature type="modified residue" description="Pyrrolidone carboxylic acid" evidence="1">
    <location>
        <position position="153"/>
    </location>
</feature>
<feature type="modified residue" description="Proline amide" evidence="1">
    <location>
        <position position="155"/>
    </location>
</feature>
<feature type="modified residue" description="Pyrrolidone carboxylic acid" evidence="1">
    <location>
        <position position="168"/>
    </location>
</feature>
<feature type="modified residue" description="Proline amide" evidence="1">
    <location>
        <position position="170"/>
    </location>
</feature>
<feature type="modified residue" description="Pyrrolidone carboxylic acid" evidence="1">
    <location>
        <position position="193"/>
    </location>
</feature>
<feature type="modified residue" description="Proline amide" evidence="1">
    <location>
        <position position="195"/>
    </location>
</feature>
<feature type="sequence variant">
    <original>L</original>
    <variation>S</variation>
    <location>
        <position position="46"/>
    </location>
</feature>
<feature type="sequence variant">
    <original>M</original>
    <variation>I</variation>
    <location>
        <position position="70"/>
    </location>
</feature>
<feature type="sequence variant">
    <location>
        <begin position="218"/>
        <end position="220"/>
    </location>
</feature>
<dbReference type="EMBL" id="M34699">
    <property type="protein sequence ID" value="AAA49973.1"/>
    <property type="molecule type" value="mRNA"/>
</dbReference>
<dbReference type="EMBL" id="M34698">
    <property type="protein sequence ID" value="AAA49974.1"/>
    <property type="molecule type" value="mRNA"/>
</dbReference>
<dbReference type="EMBL" id="X00770">
    <property type="protein sequence ID" value="CAA25345.1"/>
    <property type="status" value="ALT_TERM"/>
    <property type="molecule type" value="mRNA"/>
</dbReference>
<dbReference type="PIR" id="A37061">
    <property type="entry name" value="RHXLT"/>
</dbReference>
<dbReference type="RefSeq" id="NP_001081334.1">
    <property type="nucleotide sequence ID" value="NM_001087865.1"/>
</dbReference>
<dbReference type="SMR" id="P01152"/>
<dbReference type="AGR" id="Xenbase:XB-GENE-5805996"/>
<dbReference type="Xenbase" id="XB-GENE-5805996">
    <property type="gene designation" value="trh.L"/>
</dbReference>
<dbReference type="Proteomes" id="UP000186698">
    <property type="component" value="Unplaced"/>
</dbReference>
<dbReference type="Bgee" id="397780">
    <property type="expression patterns" value="Expressed in zone of skin and 6 other cell types or tissues"/>
</dbReference>
<dbReference type="GO" id="GO:0005576">
    <property type="term" value="C:extracellular region"/>
    <property type="evidence" value="ECO:0007669"/>
    <property type="project" value="UniProtKB-SubCell"/>
</dbReference>
<dbReference type="GO" id="GO:0030141">
    <property type="term" value="C:secretory granule"/>
    <property type="evidence" value="ECO:0000318"/>
    <property type="project" value="GO_Central"/>
</dbReference>
<dbReference type="GO" id="GO:0008437">
    <property type="term" value="F:thyrotropin-releasing hormone activity"/>
    <property type="evidence" value="ECO:0000318"/>
    <property type="project" value="GO_Central"/>
</dbReference>
<dbReference type="GO" id="GO:0042755">
    <property type="term" value="P:eating behavior"/>
    <property type="evidence" value="ECO:0000318"/>
    <property type="project" value="GO_Central"/>
</dbReference>
<dbReference type="GO" id="GO:0001692">
    <property type="term" value="P:histamine metabolic process"/>
    <property type="evidence" value="ECO:0000318"/>
    <property type="project" value="GO_Central"/>
</dbReference>
<dbReference type="GO" id="GO:0009755">
    <property type="term" value="P:hormone-mediated signaling pathway"/>
    <property type="evidence" value="ECO:0007669"/>
    <property type="project" value="InterPro"/>
</dbReference>
<dbReference type="GO" id="GO:0014050">
    <property type="term" value="P:negative regulation of glutamate secretion"/>
    <property type="evidence" value="ECO:0000318"/>
    <property type="project" value="GO_Central"/>
</dbReference>
<dbReference type="GO" id="GO:0014054">
    <property type="term" value="P:positive regulation of gamma-aminobutyric acid secretion"/>
    <property type="evidence" value="ECO:0000318"/>
    <property type="project" value="GO_Central"/>
</dbReference>
<dbReference type="GO" id="GO:0032024">
    <property type="term" value="P:positive regulation of insulin secretion"/>
    <property type="evidence" value="ECO:0000318"/>
    <property type="project" value="GO_Central"/>
</dbReference>
<dbReference type="InterPro" id="IPR008857">
    <property type="entry name" value="TRH"/>
</dbReference>
<dbReference type="PANTHER" id="PTHR17530">
    <property type="entry name" value="PRO-THYROTROPIN-RELEASING HORMONE"/>
    <property type="match status" value="1"/>
</dbReference>
<dbReference type="PANTHER" id="PTHR17530:SF2">
    <property type="entry name" value="PRO-THYROTROPIN-RELEASING HORMONE"/>
    <property type="match status" value="1"/>
</dbReference>
<dbReference type="Pfam" id="PF05438">
    <property type="entry name" value="TRH"/>
    <property type="match status" value="1"/>
</dbReference>
<dbReference type="PIRSF" id="PIRSF001795">
    <property type="entry name" value="TRH"/>
    <property type="match status" value="1"/>
</dbReference>